<feature type="signal peptide" evidence="1">
    <location>
        <begin position="1"/>
        <end position="26"/>
    </location>
</feature>
<feature type="chain" id="PRO_0000013662" description="Uncharacterized protein AF_1567">
    <location>
        <begin position="27"/>
        <end position="295"/>
    </location>
</feature>
<name>Y1567_ARCFU</name>
<keyword id="KW-1185">Reference proteome</keyword>
<keyword id="KW-0732">Signal</keyword>
<dbReference type="EMBL" id="AE000782">
    <property type="protein sequence ID" value="AAB89686.1"/>
    <property type="molecule type" value="Genomic_DNA"/>
</dbReference>
<dbReference type="PIR" id="F69445">
    <property type="entry name" value="F69445"/>
</dbReference>
<dbReference type="RefSeq" id="WP_010879064.1">
    <property type="nucleotide sequence ID" value="NC_000917.1"/>
</dbReference>
<dbReference type="STRING" id="224325.AF_1567"/>
<dbReference type="PaxDb" id="224325-AF_1567"/>
<dbReference type="EnsemblBacteria" id="AAB89686">
    <property type="protein sequence ID" value="AAB89686"/>
    <property type="gene ID" value="AF_1567"/>
</dbReference>
<dbReference type="KEGG" id="afu:AF_1567"/>
<dbReference type="eggNOG" id="arCOG06134">
    <property type="taxonomic scope" value="Archaea"/>
</dbReference>
<dbReference type="HOGENOM" id="CLU_848924_0_0_2"/>
<dbReference type="OrthoDB" id="372265at2157"/>
<dbReference type="Proteomes" id="UP000002199">
    <property type="component" value="Chromosome"/>
</dbReference>
<accession>O28705</accession>
<sequence>MKKYLALAAIVAICALWLTQNSNFEAGKTFKLFDSGKTAILRPVIYYNLPNGSVIEVRDSNPFPFTIELASGGLGINAPSKSLEVYTYETYKKPEEIKVIAKSFGASLDKLYYNEITHAYLYNDEKLSFEYYPNTGYLRILFKNSSLEKASILNGLLNYSYQKIEKNGGVFYARNFDGLSSNVGLLVKSDEKGIRSIEGILLKSVKLKGKYELIPIDRIPEMLEKRVKGDLKADDWYLSNIAFTKLTLTNVSLMYTITPDGILPVYWFEGKYELDFEGIKDSGTVEGRIVAVSAN</sequence>
<gene>
    <name type="ordered locus">AF_1567</name>
</gene>
<proteinExistence type="inferred from homology"/>
<evidence type="ECO:0000255" key="1"/>
<reference key="1">
    <citation type="journal article" date="1997" name="Nature">
        <title>The complete genome sequence of the hyperthermophilic, sulphate-reducing archaeon Archaeoglobus fulgidus.</title>
        <authorList>
            <person name="Klenk H.-P."/>
            <person name="Clayton R.A."/>
            <person name="Tomb J.-F."/>
            <person name="White O."/>
            <person name="Nelson K.E."/>
            <person name="Ketchum K.A."/>
            <person name="Dodson R.J."/>
            <person name="Gwinn M.L."/>
            <person name="Hickey E.K."/>
            <person name="Peterson J.D."/>
            <person name="Richardson D.L."/>
            <person name="Kerlavage A.R."/>
            <person name="Graham D.E."/>
            <person name="Kyrpides N.C."/>
            <person name="Fleischmann R.D."/>
            <person name="Quackenbush J."/>
            <person name="Lee N.H."/>
            <person name="Sutton G.G."/>
            <person name="Gill S.R."/>
            <person name="Kirkness E.F."/>
            <person name="Dougherty B.A."/>
            <person name="McKenney K."/>
            <person name="Adams M.D."/>
            <person name="Loftus B.J."/>
            <person name="Peterson S.N."/>
            <person name="Reich C.I."/>
            <person name="McNeil L.K."/>
            <person name="Badger J.H."/>
            <person name="Glodek A."/>
            <person name="Zhou L."/>
            <person name="Overbeek R."/>
            <person name="Gocayne J.D."/>
            <person name="Weidman J.F."/>
            <person name="McDonald L.A."/>
            <person name="Utterback T.R."/>
            <person name="Cotton M.D."/>
            <person name="Spriggs T."/>
            <person name="Artiach P."/>
            <person name="Kaine B.P."/>
            <person name="Sykes S.M."/>
            <person name="Sadow P.W."/>
            <person name="D'Andrea K.P."/>
            <person name="Bowman C."/>
            <person name="Fujii C."/>
            <person name="Garland S.A."/>
            <person name="Mason T.M."/>
            <person name="Olsen G.J."/>
            <person name="Fraser C.M."/>
            <person name="Smith H.O."/>
            <person name="Woese C.R."/>
            <person name="Venter J.C."/>
        </authorList>
    </citation>
    <scope>NUCLEOTIDE SEQUENCE [LARGE SCALE GENOMIC DNA]</scope>
    <source>
        <strain>ATCC 49558 / DSM 4304 / JCM 9628 / NBRC 100126 / VC-16</strain>
    </source>
</reference>
<protein>
    <recommendedName>
        <fullName>Uncharacterized protein AF_1567</fullName>
    </recommendedName>
</protein>
<organism>
    <name type="scientific">Archaeoglobus fulgidus (strain ATCC 49558 / DSM 4304 / JCM 9628 / NBRC 100126 / VC-16)</name>
    <dbReference type="NCBI Taxonomy" id="224325"/>
    <lineage>
        <taxon>Archaea</taxon>
        <taxon>Methanobacteriati</taxon>
        <taxon>Methanobacteriota</taxon>
        <taxon>Archaeoglobi</taxon>
        <taxon>Archaeoglobales</taxon>
        <taxon>Archaeoglobaceae</taxon>
        <taxon>Archaeoglobus</taxon>
    </lineage>
</organism>